<accession>P67979</accession>
<accession>P87493</accession>
<evidence type="ECO:0000250" key="1"/>
<evidence type="ECO:0000255" key="2">
    <source>
        <dbReference type="PROSITE-ProRule" id="PRU00680"/>
    </source>
</evidence>
<name>LYSC_TRAOB</name>
<proteinExistence type="evidence at transcript level"/>
<gene>
    <name type="primary">LYZ</name>
    <name type="synonym">LZM</name>
</gene>
<organism>
    <name type="scientific">Trachypithecus obscurus</name>
    <name type="common">Dusky leaf-monkey</name>
    <name type="synonym">Presbytis obscura</name>
    <dbReference type="NCBI Taxonomy" id="54181"/>
    <lineage>
        <taxon>Eukaryota</taxon>
        <taxon>Metazoa</taxon>
        <taxon>Chordata</taxon>
        <taxon>Craniata</taxon>
        <taxon>Vertebrata</taxon>
        <taxon>Euteleostomi</taxon>
        <taxon>Mammalia</taxon>
        <taxon>Eutheria</taxon>
        <taxon>Euarchontoglires</taxon>
        <taxon>Primates</taxon>
        <taxon>Haplorrhini</taxon>
        <taxon>Catarrhini</taxon>
        <taxon>Cercopithecidae</taxon>
        <taxon>Colobinae</taxon>
        <taxon>Trachypithecus</taxon>
    </lineage>
</organism>
<keyword id="KW-0929">Antimicrobial</keyword>
<keyword id="KW-0081">Bacteriolytic enzyme</keyword>
<keyword id="KW-0222">Digestion</keyword>
<keyword id="KW-1015">Disulfide bond</keyword>
<keyword id="KW-0326">Glycosidase</keyword>
<keyword id="KW-0378">Hydrolase</keyword>
<keyword id="KW-0964">Secreted</keyword>
<keyword id="KW-0732">Signal</keyword>
<feature type="signal peptide" evidence="1">
    <location>
        <begin position="1"/>
        <end position="18"/>
    </location>
</feature>
<feature type="chain" id="PRO_0000018491" description="Lysozyme C">
    <location>
        <begin position="19"/>
        <end position="148"/>
    </location>
</feature>
<feature type="domain" description="C-type lysozyme" evidence="2">
    <location>
        <begin position="19"/>
        <end position="148"/>
    </location>
</feature>
<feature type="active site" evidence="2">
    <location>
        <position position="53"/>
    </location>
</feature>
<feature type="active site" evidence="2">
    <location>
        <position position="71"/>
    </location>
</feature>
<feature type="disulfide bond" evidence="2">
    <location>
        <begin position="24"/>
        <end position="146"/>
    </location>
</feature>
<feature type="disulfide bond" evidence="2">
    <location>
        <begin position="48"/>
        <end position="134"/>
    </location>
</feature>
<feature type="disulfide bond" evidence="2">
    <location>
        <begin position="83"/>
        <end position="99"/>
    </location>
</feature>
<feature type="disulfide bond" evidence="2">
    <location>
        <begin position="95"/>
        <end position="113"/>
    </location>
</feature>
<dbReference type="EC" id="3.2.1.17"/>
<dbReference type="EMBL" id="U76917">
    <property type="protein sequence ID" value="AAB41213.1"/>
    <property type="molecule type" value="mRNA"/>
</dbReference>
<dbReference type="SMR" id="P67979"/>
<dbReference type="GO" id="GO:0005576">
    <property type="term" value="C:extracellular region"/>
    <property type="evidence" value="ECO:0007669"/>
    <property type="project" value="UniProtKB-SubCell"/>
</dbReference>
<dbReference type="GO" id="GO:0003796">
    <property type="term" value="F:lysozyme activity"/>
    <property type="evidence" value="ECO:0007669"/>
    <property type="project" value="UniProtKB-EC"/>
</dbReference>
<dbReference type="GO" id="GO:0050829">
    <property type="term" value="P:defense response to Gram-negative bacterium"/>
    <property type="evidence" value="ECO:0007669"/>
    <property type="project" value="TreeGrafter"/>
</dbReference>
<dbReference type="GO" id="GO:0050830">
    <property type="term" value="P:defense response to Gram-positive bacterium"/>
    <property type="evidence" value="ECO:0007669"/>
    <property type="project" value="TreeGrafter"/>
</dbReference>
<dbReference type="GO" id="GO:0007586">
    <property type="term" value="P:digestion"/>
    <property type="evidence" value="ECO:0007669"/>
    <property type="project" value="UniProtKB-KW"/>
</dbReference>
<dbReference type="GO" id="GO:0031640">
    <property type="term" value="P:killing of cells of another organism"/>
    <property type="evidence" value="ECO:0007669"/>
    <property type="project" value="UniProtKB-KW"/>
</dbReference>
<dbReference type="CDD" id="cd16897">
    <property type="entry name" value="LYZ_C"/>
    <property type="match status" value="1"/>
</dbReference>
<dbReference type="FunFam" id="1.10.530.10:FF:000001">
    <property type="entry name" value="Lysozyme C"/>
    <property type="match status" value="1"/>
</dbReference>
<dbReference type="Gene3D" id="1.10.530.10">
    <property type="match status" value="1"/>
</dbReference>
<dbReference type="InterPro" id="IPR001916">
    <property type="entry name" value="Glyco_hydro_22"/>
</dbReference>
<dbReference type="InterPro" id="IPR019799">
    <property type="entry name" value="Glyco_hydro_22_CS"/>
</dbReference>
<dbReference type="InterPro" id="IPR000974">
    <property type="entry name" value="Glyco_hydro_22_lys"/>
</dbReference>
<dbReference type="InterPro" id="IPR023346">
    <property type="entry name" value="Lysozyme-like_dom_sf"/>
</dbReference>
<dbReference type="PANTHER" id="PTHR11407">
    <property type="entry name" value="LYSOZYME C"/>
    <property type="match status" value="1"/>
</dbReference>
<dbReference type="PANTHER" id="PTHR11407:SF28">
    <property type="entry name" value="LYSOZYME C"/>
    <property type="match status" value="1"/>
</dbReference>
<dbReference type="Pfam" id="PF00062">
    <property type="entry name" value="Lys"/>
    <property type="match status" value="1"/>
</dbReference>
<dbReference type="PRINTS" id="PR00137">
    <property type="entry name" value="LYSOZYME"/>
</dbReference>
<dbReference type="PRINTS" id="PR00135">
    <property type="entry name" value="LYZLACT"/>
</dbReference>
<dbReference type="SMART" id="SM00263">
    <property type="entry name" value="LYZ1"/>
    <property type="match status" value="1"/>
</dbReference>
<dbReference type="SUPFAM" id="SSF53955">
    <property type="entry name" value="Lysozyme-like"/>
    <property type="match status" value="1"/>
</dbReference>
<dbReference type="PROSITE" id="PS00128">
    <property type="entry name" value="GLYCOSYL_HYDROL_F22_1"/>
    <property type="match status" value="1"/>
</dbReference>
<dbReference type="PROSITE" id="PS51348">
    <property type="entry name" value="GLYCOSYL_HYDROL_F22_2"/>
    <property type="match status" value="1"/>
</dbReference>
<sequence length="148" mass="16259">MRALIILGLVLLSVTVQGKIFERCELARTLKKLGLDGYKGVSLANWVCLAKWESGYNTEATNYNPGDESTDYGIFQINSRYWCNNGKTPGAVDACHISCSALLQNNIADAVACAKRVVSDPQGIRAWVAWRNHCQNKDVSQYVKGCGV</sequence>
<comment type="function">
    <text>Lysozymes have primarily a bacteriolytic function; those in tissues and body fluids are associated with the monocyte-macrophage system and enhance the activity of immunoagents. Also plays a role in digestion in this species.</text>
</comment>
<comment type="catalytic activity">
    <reaction>
        <text>Hydrolysis of (1-&gt;4)-beta-linkages between N-acetylmuramic acid and N-acetyl-D-glucosamine residues in a peptidoglycan and between N-acetyl-D-glucosamine residues in chitodextrins.</text>
        <dbReference type="EC" id="3.2.1.17"/>
    </reaction>
</comment>
<comment type="subunit">
    <text>Monomer.</text>
</comment>
<comment type="subcellular location">
    <subcellularLocation>
        <location evidence="1">Secreted</location>
    </subcellularLocation>
</comment>
<comment type="miscellaneous">
    <text>Lysozyme C is capable of both hydrolysis and transglycosylation; it also shows a slight esterase activity. It acts rapidly on both peptide-substituted and unsubstituted peptidoglycan, and slowly on chitin oligosaccharides.</text>
</comment>
<comment type="similarity">
    <text evidence="2">Belongs to the glycosyl hydrolase 22 family.</text>
</comment>
<protein>
    <recommendedName>
        <fullName>Lysozyme C</fullName>
        <ecNumber>3.2.1.17</ecNumber>
    </recommendedName>
    <alternativeName>
        <fullName>1,4-beta-N-acetylmuramidase C</fullName>
    </alternativeName>
</protein>
<reference key="1">
    <citation type="journal article" date="1997" name="Nature">
        <title>Episodic adaptive evolution of primate lysozymes.</title>
        <authorList>
            <person name="Messier W."/>
            <person name="Stewart C.B."/>
        </authorList>
    </citation>
    <scope>NUCLEOTIDE SEQUENCE [MRNA]</scope>
    <source>
        <tissue>Blood</tissue>
        <tissue>Stomach</tissue>
    </source>
</reference>